<sequence>MRQLLPGDTVWRNIRLATMDPQRQAPYGLVDSQALIVREGHICDIVPETQLPVSGDNIHDMQGRLVTPGLIDCHTHLVFAGNRAAEWEQRLNGASYQHISAQGGGINATVSATRACAEETLYLLARERMMRLASEGVTLLEIKSGYGLELATEEKLLRVAAKLAAENAIDISPTLLAAHATPAEYRDDPDGYITLVCETMIPQLWQKGLFDAVDLFCESVGFNVAQSERVLQTAKALGIPVKGHVEQLSLLGGAQLVSRYQGLSADHIEYLDEAGVAAMRDGGTVGVLLPGAFYFLRETQRPPVELLRRYQVPVAVASDFNPGTSPFCSLHLAMNMACVQFGLTPEEAWSGVTRHAARALGRQATHGQIRAGYRADFVVWDAEQPVEIVYEPGRNPLYQRVYRGQIS</sequence>
<comment type="function">
    <text evidence="1">Catalyzes the hydrolytic cleavage of the carbon-nitrogen bond in imidazolone-5-propanoate to yield N-formimidoyl-L-glutamate. It is the third step in the universal histidine degradation pathway.</text>
</comment>
<comment type="catalytic activity">
    <reaction evidence="1">
        <text>4-imidazolone-5-propanoate + H2O = N-formimidoyl-L-glutamate</text>
        <dbReference type="Rhea" id="RHEA:23660"/>
        <dbReference type="ChEBI" id="CHEBI:15377"/>
        <dbReference type="ChEBI" id="CHEBI:58928"/>
        <dbReference type="ChEBI" id="CHEBI:77893"/>
        <dbReference type="EC" id="3.5.2.7"/>
    </reaction>
</comment>
<comment type="cofactor">
    <cofactor evidence="1">
        <name>Zn(2+)</name>
        <dbReference type="ChEBI" id="CHEBI:29105"/>
    </cofactor>
    <cofactor evidence="1">
        <name>Fe(3+)</name>
        <dbReference type="ChEBI" id="CHEBI:29034"/>
    </cofactor>
    <text evidence="1">Binds 1 zinc or iron ion per subunit.</text>
</comment>
<comment type="pathway">
    <text evidence="1">Amino-acid degradation; L-histidine degradation into L-glutamate; N-formimidoyl-L-glutamate from L-histidine: step 3/3.</text>
</comment>
<comment type="subcellular location">
    <subcellularLocation>
        <location evidence="1">Cytoplasm</location>
    </subcellularLocation>
</comment>
<comment type="similarity">
    <text evidence="1">Belongs to the metallo-dependent hydrolases superfamily. HutI family.</text>
</comment>
<dbReference type="EC" id="3.5.2.7" evidence="1"/>
<dbReference type="EMBL" id="AL513382">
    <property type="protein sequence ID" value="CAD05235.1"/>
    <property type="molecule type" value="Genomic_DNA"/>
</dbReference>
<dbReference type="EMBL" id="AE014613">
    <property type="protein sequence ID" value="AAO69717.1"/>
    <property type="molecule type" value="Genomic_DNA"/>
</dbReference>
<dbReference type="RefSeq" id="NP_455329.1">
    <property type="nucleotide sequence ID" value="NC_003198.1"/>
</dbReference>
<dbReference type="RefSeq" id="WP_001249497.1">
    <property type="nucleotide sequence ID" value="NZ_WSUR01000021.1"/>
</dbReference>
<dbReference type="SMR" id="Q8Z8A0"/>
<dbReference type="STRING" id="220341.gene:17584825"/>
<dbReference type="KEGG" id="stt:t2100"/>
<dbReference type="KEGG" id="sty:STY0820"/>
<dbReference type="PATRIC" id="fig|220341.7.peg.824"/>
<dbReference type="eggNOG" id="COG1228">
    <property type="taxonomic scope" value="Bacteria"/>
</dbReference>
<dbReference type="HOGENOM" id="CLU_041647_0_0_6"/>
<dbReference type="OMA" id="MVYEPGR"/>
<dbReference type="OrthoDB" id="9776455at2"/>
<dbReference type="UniPathway" id="UPA00379">
    <property type="reaction ID" value="UER00551"/>
</dbReference>
<dbReference type="Proteomes" id="UP000000541">
    <property type="component" value="Chromosome"/>
</dbReference>
<dbReference type="Proteomes" id="UP000002670">
    <property type="component" value="Chromosome"/>
</dbReference>
<dbReference type="GO" id="GO:0005737">
    <property type="term" value="C:cytoplasm"/>
    <property type="evidence" value="ECO:0007669"/>
    <property type="project" value="UniProtKB-SubCell"/>
</dbReference>
<dbReference type="GO" id="GO:0050480">
    <property type="term" value="F:imidazolonepropionase activity"/>
    <property type="evidence" value="ECO:0007669"/>
    <property type="project" value="UniProtKB-UniRule"/>
</dbReference>
<dbReference type="GO" id="GO:0005506">
    <property type="term" value="F:iron ion binding"/>
    <property type="evidence" value="ECO:0007669"/>
    <property type="project" value="UniProtKB-UniRule"/>
</dbReference>
<dbReference type="GO" id="GO:0008270">
    <property type="term" value="F:zinc ion binding"/>
    <property type="evidence" value="ECO:0007669"/>
    <property type="project" value="UniProtKB-UniRule"/>
</dbReference>
<dbReference type="GO" id="GO:0019556">
    <property type="term" value="P:L-histidine catabolic process to glutamate and formamide"/>
    <property type="evidence" value="ECO:0007669"/>
    <property type="project" value="UniProtKB-UniPathway"/>
</dbReference>
<dbReference type="GO" id="GO:0019557">
    <property type="term" value="P:L-histidine catabolic process to glutamate and formate"/>
    <property type="evidence" value="ECO:0007669"/>
    <property type="project" value="UniProtKB-UniPathway"/>
</dbReference>
<dbReference type="CDD" id="cd01296">
    <property type="entry name" value="Imidazolone-5PH"/>
    <property type="match status" value="1"/>
</dbReference>
<dbReference type="FunFam" id="3.20.20.140:FF:000007">
    <property type="entry name" value="Imidazolonepropionase"/>
    <property type="match status" value="1"/>
</dbReference>
<dbReference type="Gene3D" id="3.20.20.140">
    <property type="entry name" value="Metal-dependent hydrolases"/>
    <property type="match status" value="1"/>
</dbReference>
<dbReference type="Gene3D" id="2.30.40.10">
    <property type="entry name" value="Urease, subunit C, domain 1"/>
    <property type="match status" value="1"/>
</dbReference>
<dbReference type="HAMAP" id="MF_00372">
    <property type="entry name" value="HutI"/>
    <property type="match status" value="1"/>
</dbReference>
<dbReference type="InterPro" id="IPR006680">
    <property type="entry name" value="Amidohydro-rel"/>
</dbReference>
<dbReference type="InterPro" id="IPR005920">
    <property type="entry name" value="HutI"/>
</dbReference>
<dbReference type="InterPro" id="IPR011059">
    <property type="entry name" value="Metal-dep_hydrolase_composite"/>
</dbReference>
<dbReference type="InterPro" id="IPR032466">
    <property type="entry name" value="Metal_Hydrolase"/>
</dbReference>
<dbReference type="NCBIfam" id="TIGR01224">
    <property type="entry name" value="hutI"/>
    <property type="match status" value="1"/>
</dbReference>
<dbReference type="PANTHER" id="PTHR42752">
    <property type="entry name" value="IMIDAZOLONEPROPIONASE"/>
    <property type="match status" value="1"/>
</dbReference>
<dbReference type="PANTHER" id="PTHR42752:SF1">
    <property type="entry name" value="IMIDAZOLONEPROPIONASE-RELATED"/>
    <property type="match status" value="1"/>
</dbReference>
<dbReference type="Pfam" id="PF01979">
    <property type="entry name" value="Amidohydro_1"/>
    <property type="match status" value="1"/>
</dbReference>
<dbReference type="SUPFAM" id="SSF51338">
    <property type="entry name" value="Composite domain of metallo-dependent hydrolases"/>
    <property type="match status" value="1"/>
</dbReference>
<dbReference type="SUPFAM" id="SSF51556">
    <property type="entry name" value="Metallo-dependent hydrolases"/>
    <property type="match status" value="1"/>
</dbReference>
<protein>
    <recommendedName>
        <fullName evidence="1">Imidazolonepropionase</fullName>
        <ecNumber evidence="1">3.5.2.7</ecNumber>
    </recommendedName>
    <alternativeName>
        <fullName evidence="1">Imidazolone-5-propionate hydrolase</fullName>
    </alternativeName>
</protein>
<accession>Q8Z8A0</accession>
<proteinExistence type="inferred from homology"/>
<keyword id="KW-0963">Cytoplasm</keyword>
<keyword id="KW-0369">Histidine metabolism</keyword>
<keyword id="KW-0378">Hydrolase</keyword>
<keyword id="KW-0408">Iron</keyword>
<keyword id="KW-0479">Metal-binding</keyword>
<keyword id="KW-0862">Zinc</keyword>
<organism>
    <name type="scientific">Salmonella typhi</name>
    <dbReference type="NCBI Taxonomy" id="90370"/>
    <lineage>
        <taxon>Bacteria</taxon>
        <taxon>Pseudomonadati</taxon>
        <taxon>Pseudomonadota</taxon>
        <taxon>Gammaproteobacteria</taxon>
        <taxon>Enterobacterales</taxon>
        <taxon>Enterobacteriaceae</taxon>
        <taxon>Salmonella</taxon>
    </lineage>
</organism>
<gene>
    <name evidence="1" type="primary">hutI</name>
    <name type="ordered locus">STY0820</name>
    <name type="ordered locus">t2100</name>
</gene>
<name>HUTI_SALTI</name>
<evidence type="ECO:0000255" key="1">
    <source>
        <dbReference type="HAMAP-Rule" id="MF_00372"/>
    </source>
</evidence>
<feature type="chain" id="PRO_0000160956" description="Imidazolonepropionase">
    <location>
        <begin position="1"/>
        <end position="407"/>
    </location>
</feature>
<feature type="binding site" evidence="1">
    <location>
        <position position="74"/>
    </location>
    <ligand>
        <name>Fe(3+)</name>
        <dbReference type="ChEBI" id="CHEBI:29034"/>
    </ligand>
</feature>
<feature type="binding site" evidence="1">
    <location>
        <position position="74"/>
    </location>
    <ligand>
        <name>Zn(2+)</name>
        <dbReference type="ChEBI" id="CHEBI:29105"/>
    </ligand>
</feature>
<feature type="binding site" evidence="1">
    <location>
        <position position="76"/>
    </location>
    <ligand>
        <name>Fe(3+)</name>
        <dbReference type="ChEBI" id="CHEBI:29034"/>
    </ligand>
</feature>
<feature type="binding site" evidence="1">
    <location>
        <position position="76"/>
    </location>
    <ligand>
        <name>Zn(2+)</name>
        <dbReference type="ChEBI" id="CHEBI:29105"/>
    </ligand>
</feature>
<feature type="binding site" evidence="1">
    <location>
        <position position="83"/>
    </location>
    <ligand>
        <name>4-imidazolone-5-propanoate</name>
        <dbReference type="ChEBI" id="CHEBI:77893"/>
    </ligand>
</feature>
<feature type="binding site" evidence="1">
    <location>
        <position position="146"/>
    </location>
    <ligand>
        <name>4-imidazolone-5-propanoate</name>
        <dbReference type="ChEBI" id="CHEBI:77893"/>
    </ligand>
</feature>
<feature type="binding site" evidence="1">
    <location>
        <position position="146"/>
    </location>
    <ligand>
        <name>N-formimidoyl-L-glutamate</name>
        <dbReference type="ChEBI" id="CHEBI:58928"/>
    </ligand>
</feature>
<feature type="binding site" evidence="1">
    <location>
        <position position="179"/>
    </location>
    <ligand>
        <name>4-imidazolone-5-propanoate</name>
        <dbReference type="ChEBI" id="CHEBI:77893"/>
    </ligand>
</feature>
<feature type="binding site" evidence="1">
    <location>
        <position position="244"/>
    </location>
    <ligand>
        <name>Fe(3+)</name>
        <dbReference type="ChEBI" id="CHEBI:29034"/>
    </ligand>
</feature>
<feature type="binding site" evidence="1">
    <location>
        <position position="244"/>
    </location>
    <ligand>
        <name>Zn(2+)</name>
        <dbReference type="ChEBI" id="CHEBI:29105"/>
    </ligand>
</feature>
<feature type="binding site" evidence="1">
    <location>
        <position position="247"/>
    </location>
    <ligand>
        <name>4-imidazolone-5-propanoate</name>
        <dbReference type="ChEBI" id="CHEBI:77893"/>
    </ligand>
</feature>
<feature type="binding site" evidence="1">
    <location>
        <position position="319"/>
    </location>
    <ligand>
        <name>Fe(3+)</name>
        <dbReference type="ChEBI" id="CHEBI:29034"/>
    </ligand>
</feature>
<feature type="binding site" evidence="1">
    <location>
        <position position="319"/>
    </location>
    <ligand>
        <name>Zn(2+)</name>
        <dbReference type="ChEBI" id="CHEBI:29105"/>
    </ligand>
</feature>
<feature type="binding site" evidence="1">
    <location>
        <position position="321"/>
    </location>
    <ligand>
        <name>N-formimidoyl-L-glutamate</name>
        <dbReference type="ChEBI" id="CHEBI:58928"/>
    </ligand>
</feature>
<feature type="binding site" evidence="1">
    <location>
        <position position="323"/>
    </location>
    <ligand>
        <name>N-formimidoyl-L-glutamate</name>
        <dbReference type="ChEBI" id="CHEBI:58928"/>
    </ligand>
</feature>
<feature type="binding site" evidence="1">
    <location>
        <position position="324"/>
    </location>
    <ligand>
        <name>4-imidazolone-5-propanoate</name>
        <dbReference type="ChEBI" id="CHEBI:77893"/>
    </ligand>
</feature>
<reference key="1">
    <citation type="journal article" date="2001" name="Nature">
        <title>Complete genome sequence of a multiple drug resistant Salmonella enterica serovar Typhi CT18.</title>
        <authorList>
            <person name="Parkhill J."/>
            <person name="Dougan G."/>
            <person name="James K.D."/>
            <person name="Thomson N.R."/>
            <person name="Pickard D."/>
            <person name="Wain J."/>
            <person name="Churcher C.M."/>
            <person name="Mungall K.L."/>
            <person name="Bentley S.D."/>
            <person name="Holden M.T.G."/>
            <person name="Sebaihia M."/>
            <person name="Baker S."/>
            <person name="Basham D."/>
            <person name="Brooks K."/>
            <person name="Chillingworth T."/>
            <person name="Connerton P."/>
            <person name="Cronin A."/>
            <person name="Davis P."/>
            <person name="Davies R.M."/>
            <person name="Dowd L."/>
            <person name="White N."/>
            <person name="Farrar J."/>
            <person name="Feltwell T."/>
            <person name="Hamlin N."/>
            <person name="Haque A."/>
            <person name="Hien T.T."/>
            <person name="Holroyd S."/>
            <person name="Jagels K."/>
            <person name="Krogh A."/>
            <person name="Larsen T.S."/>
            <person name="Leather S."/>
            <person name="Moule S."/>
            <person name="O'Gaora P."/>
            <person name="Parry C."/>
            <person name="Quail M.A."/>
            <person name="Rutherford K.M."/>
            <person name="Simmonds M."/>
            <person name="Skelton J."/>
            <person name="Stevens K."/>
            <person name="Whitehead S."/>
            <person name="Barrell B.G."/>
        </authorList>
    </citation>
    <scope>NUCLEOTIDE SEQUENCE [LARGE SCALE GENOMIC DNA]</scope>
    <source>
        <strain>CT18</strain>
    </source>
</reference>
<reference key="2">
    <citation type="journal article" date="2003" name="J. Bacteriol.">
        <title>Comparative genomics of Salmonella enterica serovar Typhi strains Ty2 and CT18.</title>
        <authorList>
            <person name="Deng W."/>
            <person name="Liou S.-R."/>
            <person name="Plunkett G. III"/>
            <person name="Mayhew G.F."/>
            <person name="Rose D.J."/>
            <person name="Burland V."/>
            <person name="Kodoyianni V."/>
            <person name="Schwartz D.C."/>
            <person name="Blattner F.R."/>
        </authorList>
    </citation>
    <scope>NUCLEOTIDE SEQUENCE [LARGE SCALE GENOMIC DNA]</scope>
    <source>
        <strain>ATCC 700931 / Ty2</strain>
    </source>
</reference>